<sequence length="772" mass="87230">MAAESALQVVEKLQARLAANPDPKKLLKYLKKLSTLPITVDILAETGVGKTVNSLRKHEHVGSFARDLVAQWKKLVPVERNAEPDEQDFEKSNSRKRPRDALQKEEEMEGDYQETWKATGSRSYSPDHRQKKHRKLSELERPHKVSHGHERRDERKRCHRMSPTYSSDPESSDYGHVQSPPSCTSPHQMYVDHYRSLEEDQEPIVSHQKPGKGHSNAFQDRLGASQERHLGEPHGKGVVSQNKEHKSSHKDKRPVDAKSDEKASVVSREKSHKALSKEENRRPPSGDNAREKPPSSGVKKEKDREGSSLKKKCLPPSEAASDNHLKKPKHRDPEKAKLDKSKQGLDSFDTGKGAGDLLPKVKEKGSNNLKTPEGKVKTNLDRKSLGSLPKVEETDMEDEFEQPTMSFESYLSYDQPRKKKKKIVKTSATALGDKGLKKNDSKSTGKNLDSVQKLPKVNKTKSEKPAGADLAKLRKVPDVLPVLPDLPLPAIQANYRPLPSLELISSFQPKRKAFSSPQEEEEAGFTGRRMNSKMQVYSGSKCAYLPKMMTLHQQCIRVLKNNIDSIFEVGGVPYSVLEPVLERCTPDQLYRIEEYNHVLIEETDQLWKVHCHRDFKEERPEEYESWREMYLRLQDAREQRLRVLTKNIQFAHANKPKGRQAKMAFVNSVAKPPRDVRRRQEKFGTGGAAVPEKIKIKPAPYPMGSSHASASSISFNPSPEEPAYDGPSTSSAHLAPVVSSTVSYDPRKPTVKKIAPMMAKTIKAFKNRFSRR</sequence>
<comment type="function">
    <text evidence="8">SIII, also known as elongin, is a general transcription elongation factor that increases the RNA polymerase II transcription elongation past template-encoded arresting sites. Subunit A is transcriptionally active and its transcription activity is strongly enhanced by binding to the dimeric complex of the SIII regulatory subunits B and C (elongin BC complex).</text>
</comment>
<comment type="function">
    <text evidence="6">As part of a multisubunit complex composed of elongin BC complex (ELOB and ELOC), elongin A/ELOA, RBX1 and CUL5; polyubiquitinates monoubiquitinated POLR2A.</text>
</comment>
<comment type="subunit">
    <text evidence="1 6">Heterotrimer of an A (ELOA, ELOA2 or ELOA3P), ELOB and ELOC subunit (By similarity). Part of a multisubunit ubiquitin ligase complex consisting of elongin BC complex (ELOB and ELOC), elongin A/ELOA, RBX1 and CUL5 (PubMed:19920177). Interacts with ERCC6; the interaction is induced by DNA damaging agents or inhibitors of RNA polymerase II elongation (By similarity). Interacts (via BC-box) with CUL5 (By similarity).</text>
</comment>
<comment type="interaction">
    <interactant intactId="EBI-742350">
        <id>Q14241</id>
    </interactant>
    <interactant intactId="EBI-4400025">
        <id>Q9Y2T1</id>
        <label>AXIN2</label>
    </interactant>
    <organismsDiffer>false</organismsDiffer>
    <experiments>3</experiments>
</comment>
<comment type="interaction">
    <interactant intactId="EBI-742350">
        <id>Q14241</id>
    </interactant>
    <interactant intactId="EBI-1642333">
        <id>Q9BYV9</id>
        <label>BACH2</label>
    </interactant>
    <organismsDiffer>false</organismsDiffer>
    <experiments>3</experiments>
</comment>
<comment type="interaction">
    <interactant intactId="EBI-742350">
        <id>Q14241</id>
    </interactant>
    <interactant intactId="EBI-741724">
        <id>Q8NA61</id>
        <label>CBY2</label>
    </interactant>
    <organismsDiffer>false</organismsDiffer>
    <experiments>3</experiments>
</comment>
<comment type="interaction">
    <interactant intactId="EBI-742350">
        <id>Q14241</id>
    </interactant>
    <interactant intactId="EBI-10961624">
        <id>Q2TAC2-2</id>
        <label>CCDC57</label>
    </interactant>
    <organismsDiffer>false</organismsDiffer>
    <experiments>3</experiments>
</comment>
<comment type="interaction">
    <interactant intactId="EBI-742350">
        <id>Q14241</id>
    </interactant>
    <interactant intactId="EBI-11063830">
        <id>Q86X02</id>
        <label>CDR2L</label>
    </interactant>
    <organismsDiffer>false</organismsDiffer>
    <experiments>3</experiments>
</comment>
<comment type="interaction">
    <interactant intactId="EBI-742350">
        <id>Q14241</id>
    </interactant>
    <interactant intactId="EBI-10181988">
        <id>Q8IYX8-2</id>
        <label>CEP57L1</label>
    </interactant>
    <organismsDiffer>false</organismsDiffer>
    <experiments>3</experiments>
</comment>
<comment type="interaction">
    <interactant intactId="EBI-742350">
        <id>Q14241</id>
    </interactant>
    <interactant intactId="EBI-739624">
        <id>Q8NHQ1</id>
        <label>CEP70</label>
    </interactant>
    <organismsDiffer>false</organismsDiffer>
    <experiments>3</experiments>
</comment>
<comment type="interaction">
    <interactant intactId="EBI-742350">
        <id>Q14241</id>
    </interactant>
    <interactant intactId="EBI-947360">
        <id>Q8N137</id>
        <label>CNTROB</label>
    </interactant>
    <organismsDiffer>false</organismsDiffer>
    <experiments>3</experiments>
</comment>
<comment type="interaction">
    <interactant intactId="EBI-742350">
        <id>Q14241</id>
    </interactant>
    <interactant intactId="EBI-852291">
        <id>O60447</id>
        <label>EVI5</label>
    </interactant>
    <organismsDiffer>false</organismsDiffer>
    <experiments>3</experiments>
</comment>
<comment type="interaction">
    <interactant intactId="EBI-742350">
        <id>Q14241</id>
    </interactant>
    <interactant intactId="EBI-10175124">
        <id>Q8IZU0</id>
        <label>FAM9B</label>
    </interactant>
    <organismsDiffer>false</organismsDiffer>
    <experiments>3</experiments>
</comment>
<comment type="interaction">
    <interactant intactId="EBI-742350">
        <id>Q14241</id>
    </interactant>
    <interactant intactId="EBI-11977403">
        <id>A0A0C3SFZ9</id>
        <label>FCHO1</label>
    </interactant>
    <organismsDiffer>false</organismsDiffer>
    <experiments>3</experiments>
</comment>
<comment type="interaction">
    <interactant intactId="EBI-742350">
        <id>Q14241</id>
    </interactant>
    <interactant intactId="EBI-10172181">
        <id>Q53SE7</id>
        <label>FLJ13057</label>
    </interactant>
    <organismsDiffer>false</organismsDiffer>
    <experiments>3</experiments>
</comment>
<comment type="interaction">
    <interactant intactId="EBI-742350">
        <id>Q14241</id>
    </interactant>
    <interactant intactId="EBI-11022345">
        <id>P51114-2</id>
        <label>FXR1</label>
    </interactant>
    <organismsDiffer>false</organismsDiffer>
    <experiments>3</experiments>
</comment>
<comment type="interaction">
    <interactant intactId="EBI-742350">
        <id>Q14241</id>
    </interactant>
    <interactant intactId="EBI-2548508">
        <id>Q96IK5</id>
        <label>GMCL1</label>
    </interactant>
    <organismsDiffer>false</organismsDiffer>
    <experiments>3</experiments>
</comment>
<comment type="interaction">
    <interactant intactId="EBI-742350">
        <id>Q14241</id>
    </interactant>
    <interactant intactId="EBI-11163335">
        <id>Q9NYA3</id>
        <label>GOLGA6A</label>
    </interactant>
    <organismsDiffer>false</organismsDiffer>
    <experiments>3</experiments>
</comment>
<comment type="interaction">
    <interactant intactId="EBI-742350">
        <id>Q14241</id>
    </interactant>
    <interactant intactId="EBI-717919">
        <id>Q4V328</id>
        <label>GRIPAP1</label>
    </interactant>
    <organismsDiffer>false</organismsDiffer>
    <experiments>3</experiments>
</comment>
<comment type="interaction">
    <interactant intactId="EBI-742350">
        <id>Q14241</id>
    </interactant>
    <interactant intactId="EBI-10172004">
        <id>Q8IX15-3</id>
        <label>HOMEZ</label>
    </interactant>
    <organismsDiffer>false</organismsDiffer>
    <experiments>3</experiments>
</comment>
<comment type="interaction">
    <interactant intactId="EBI-742350">
        <id>Q14241</id>
    </interactant>
    <interactant intactId="EBI-752007">
        <id>Q96AA8</id>
        <label>JAKMIP2</label>
    </interactant>
    <organismsDiffer>false</organismsDiffer>
    <experiments>3</experiments>
</comment>
<comment type="interaction">
    <interactant intactId="EBI-742350">
        <id>Q14241</id>
    </interactant>
    <interactant intactId="EBI-2556193">
        <id>Q63ZY3</id>
        <label>KANK2</label>
    </interactant>
    <organismsDiffer>false</organismsDiffer>
    <experiments>3</experiments>
</comment>
<comment type="interaction">
    <interactant intactId="EBI-742350">
        <id>Q14241</id>
    </interactant>
    <interactant intactId="EBI-746999">
        <id>O95198</id>
        <label>KLHL2</label>
    </interactant>
    <organismsDiffer>false</organismsDiffer>
    <experiments>3</experiments>
</comment>
<comment type="interaction">
    <interactant intactId="EBI-742350">
        <id>Q14241</id>
    </interactant>
    <interactant intactId="EBI-10171697">
        <id>Q6A162</id>
        <label>KRT40</label>
    </interactant>
    <organismsDiffer>false</organismsDiffer>
    <experiments>3</experiments>
</comment>
<comment type="interaction">
    <interactant intactId="EBI-742350">
        <id>Q14241</id>
    </interactant>
    <interactant intactId="EBI-739657">
        <id>Q9BQD3</id>
        <label>KXD1</label>
    </interactant>
    <organismsDiffer>false</organismsDiffer>
    <experiments>3</experiments>
</comment>
<comment type="interaction">
    <interactant intactId="EBI-742350">
        <id>Q14241</id>
    </interactant>
    <interactant intactId="EBI-1216080">
        <id>Q9Y250</id>
        <label>LZTS1</label>
    </interactant>
    <organismsDiffer>false</organismsDiffer>
    <experiments>3</experiments>
</comment>
<comment type="interaction">
    <interactant intactId="EBI-742350">
        <id>Q14241</id>
    </interactant>
    <interactant intactId="EBI-307531">
        <id>P23508</id>
        <label>MCC</label>
    </interactant>
    <organismsDiffer>false</organismsDiffer>
    <experiments>3</experiments>
</comment>
<comment type="interaction">
    <interactant intactId="EBI-742350">
        <id>Q14241</id>
    </interactant>
    <interactant intactId="EBI-724076">
        <id>Q99750</id>
        <label>MDFI</label>
    </interactant>
    <organismsDiffer>false</organismsDiffer>
    <experiments>6</experiments>
</comment>
<comment type="interaction">
    <interactant intactId="EBI-742350">
        <id>Q14241</id>
    </interactant>
    <interactant intactId="EBI-2340316">
        <id>O15344</id>
        <label>MID1</label>
    </interactant>
    <organismsDiffer>false</organismsDiffer>
    <experiments>3</experiments>
</comment>
<comment type="interaction">
    <interactant intactId="EBI-742350">
        <id>Q14241</id>
    </interactant>
    <interactant intactId="EBI-10172526">
        <id>Q9UJV3-2</id>
        <label>MID2</label>
    </interactant>
    <organismsDiffer>false</organismsDiffer>
    <experiments>3</experiments>
</comment>
<comment type="interaction">
    <interactant intactId="EBI-742350">
        <id>Q14241</id>
    </interactant>
    <interactant intactId="EBI-8641936">
        <id>Q15742</id>
        <label>NAB2</label>
    </interactant>
    <organismsDiffer>false</organismsDiffer>
    <experiments>3</experiments>
</comment>
<comment type="interaction">
    <interactant intactId="EBI-742350">
        <id>Q14241</id>
    </interactant>
    <interactant intactId="EBI-7950997">
        <id>Q96RE7</id>
        <label>NACC1</label>
    </interactant>
    <organismsDiffer>false</organismsDiffer>
    <experiments>3</experiments>
</comment>
<comment type="interaction">
    <interactant intactId="EBI-742350">
        <id>Q14241</id>
    </interactant>
    <interactant intactId="EBI-2515597">
        <id>Q96HR8</id>
        <label>NAF1</label>
    </interactant>
    <organismsDiffer>false</organismsDiffer>
    <experiments>3</experiments>
</comment>
<comment type="interaction">
    <interactant intactId="EBI-742350">
        <id>Q14241</id>
    </interactant>
    <interactant intactId="EBI-10271199">
        <id>Q8NI38</id>
        <label>NFKBID</label>
    </interactant>
    <organismsDiffer>false</organismsDiffer>
    <experiments>3</experiments>
</comment>
<comment type="interaction">
    <interactant intactId="EBI-742350">
        <id>Q14241</id>
    </interactant>
    <interactant intactId="EBI-1054296">
        <id>O15055</id>
        <label>PER2</label>
    </interactant>
    <organismsDiffer>false</organismsDiffer>
    <experiments>3</experiments>
</comment>
<comment type="interaction">
    <interactant intactId="EBI-742350">
        <id>Q14241</id>
    </interactant>
    <interactant intactId="EBI-746202">
        <id>O00444</id>
        <label>PLK4</label>
    </interactant>
    <organismsDiffer>false</organismsDiffer>
    <experiments>6</experiments>
</comment>
<comment type="interaction">
    <interactant intactId="EBI-742350">
        <id>Q14241</id>
    </interactant>
    <interactant intactId="EBI-745426">
        <id>Q13136</id>
        <label>PPFIA1</label>
    </interactant>
    <organismsDiffer>false</organismsDiffer>
    <experiments>3</experiments>
</comment>
<comment type="interaction">
    <interactant intactId="EBI-742350">
        <id>Q14241</id>
    </interactant>
    <interactant intactId="EBI-11320284">
        <id>Q9NQX0</id>
        <label>PRDM6</label>
    </interactant>
    <organismsDiffer>false</organismsDiffer>
    <experiments>3</experiments>
</comment>
<comment type="interaction">
    <interactant intactId="EBI-742350">
        <id>Q14241</id>
    </interactant>
    <interactant intactId="EBI-351098">
        <id>O14744</id>
        <label>PRMT5</label>
    </interactant>
    <organismsDiffer>false</organismsDiffer>
    <experiments>3</experiments>
</comment>
<comment type="interaction">
    <interactant intactId="EBI-742350">
        <id>Q14241</id>
    </interactant>
    <interactant intactId="EBI-447043">
        <id>Q15276</id>
        <label>RABEP1</label>
    </interactant>
    <organismsDiffer>false</organismsDiffer>
    <experiments>3</experiments>
</comment>
<comment type="interaction">
    <interactant intactId="EBI-742350">
        <id>Q14241</id>
    </interactant>
    <interactant intactId="EBI-351113">
        <id>Q69YQ0</id>
        <label>SPECC1L</label>
    </interactant>
    <organismsDiffer>false</organismsDiffer>
    <experiments>3</experiments>
</comment>
<comment type="interaction">
    <interactant intactId="EBI-742350">
        <id>Q14241</id>
    </interactant>
    <interactant intactId="EBI-357849">
        <id>Q15025</id>
        <label>TNIP1</label>
    </interactant>
    <organismsDiffer>false</organismsDiffer>
    <experiments>3</experiments>
</comment>
<comment type="interaction">
    <interactant intactId="EBI-742350">
        <id>Q14241</id>
    </interactant>
    <interactant intactId="EBI-11952721">
        <id>Q05BL1</id>
        <label>TP53BP2</label>
    </interactant>
    <organismsDiffer>false</organismsDiffer>
    <experiments>3</experiments>
</comment>
<comment type="interaction">
    <interactant intactId="EBI-742350">
        <id>Q14241</id>
    </interactant>
    <interactant intactId="EBI-741602">
        <id>O94972</id>
        <label>TRIM37</label>
    </interactant>
    <organismsDiffer>false</organismsDiffer>
    <experiments>3</experiments>
</comment>
<comment type="interaction">
    <interactant intactId="EBI-742350">
        <id>Q14241</id>
    </interactant>
    <interactant intactId="EBI-2130429">
        <id>Q9BYV2</id>
        <label>TRIM54</label>
    </interactant>
    <organismsDiffer>false</organismsDiffer>
    <experiments>3</experiments>
</comment>
<comment type="interaction">
    <interactant intactId="EBI-742350">
        <id>Q14241</id>
    </interactant>
    <interactant intactId="EBI-10240849">
        <id>Q3KQV3</id>
        <label>ZNF792</label>
    </interactant>
    <organismsDiffer>false</organismsDiffer>
    <experiments>3</experiments>
</comment>
<comment type="interaction">
    <interactant intactId="EBI-742350">
        <id>Q14241</id>
    </interactant>
    <interactant intactId="EBI-25475856">
        <id>P0DTC9</id>
        <label>N</label>
    </interactant>
    <organismsDiffer>true</organismsDiffer>
    <experiments>3</experiments>
</comment>
<comment type="subcellular location">
    <subcellularLocation>
        <location evidence="7">Nucleus</location>
    </subcellularLocation>
    <text evidence="7">Localizes to sites of DNA damage.</text>
</comment>
<comment type="alternative products">
    <event type="alternative initiation"/>
    <isoform>
        <id>Q14241-2</id>
        <name>2</name>
        <sequence type="displayed"/>
    </isoform>
    <isoform>
        <id>Q14241-1</id>
        <name>1</name>
        <sequence type="described" ref="VSP_062177"/>
    </isoform>
</comment>
<comment type="domain">
    <text evidence="1">The BC-box, which mediates binding to the elongin BC complex, has the consensus sequence [APST]-L-x(3)-C-x(3)-[AILV].</text>
</comment>
<comment type="miscellaneous">
    <molecule>Isoform 1</molecule>
    <text evidence="9">Produced by alternative initiation (Probable). Based on proteomic data (Probable).</text>
</comment>
<comment type="sequence caution" evidence="9">
    <conflict type="erroneous initiation">
        <sequence resource="EMBL-CDS" id="AAO15305"/>
    </conflict>
    <text>Truncated N-terminus.</text>
</comment>
<proteinExistence type="evidence at protein level"/>
<keyword id="KW-0002">3D-structure</keyword>
<keyword id="KW-0007">Acetylation</keyword>
<keyword id="KW-0024">Alternative initiation</keyword>
<keyword id="KW-0539">Nucleus</keyword>
<keyword id="KW-0597">Phosphoprotein</keyword>
<keyword id="KW-1267">Proteomics identification</keyword>
<keyword id="KW-1185">Reference proteome</keyword>
<keyword id="KW-0804">Transcription</keyword>
<keyword id="KW-0805">Transcription regulation</keyword>
<reference key="1">
    <citation type="journal article" date="1996" name="Gene">
        <title>A human cDNA encoding the 110-kDa A subunit of RNA polymerase II transcription factor elongin.</title>
        <authorList>
            <person name="Aso T."/>
            <person name="Haque D."/>
            <person name="Fukudome K."/>
            <person name="Brower C.S."/>
            <person name="Conaway J.W."/>
            <person name="Conaway R.C."/>
        </authorList>
    </citation>
    <scope>NUCLEOTIDE SEQUENCE [MRNA] (ISOFORM 2)</scope>
    <scope>FUNCTION</scope>
    <source>
        <tissue>Umbilical vein</tissue>
    </source>
</reference>
<reference key="2">
    <citation type="journal article" date="2004" name="Nat. Genet.">
        <title>Complete sequencing and characterization of 21,243 full-length human cDNAs.</title>
        <authorList>
            <person name="Ota T."/>
            <person name="Suzuki Y."/>
            <person name="Nishikawa T."/>
            <person name="Otsuki T."/>
            <person name="Sugiyama T."/>
            <person name="Irie R."/>
            <person name="Wakamatsu A."/>
            <person name="Hayashi K."/>
            <person name="Sato H."/>
            <person name="Nagai K."/>
            <person name="Kimura K."/>
            <person name="Makita H."/>
            <person name="Sekine M."/>
            <person name="Obayashi M."/>
            <person name="Nishi T."/>
            <person name="Shibahara T."/>
            <person name="Tanaka T."/>
            <person name="Ishii S."/>
            <person name="Yamamoto J."/>
            <person name="Saito K."/>
            <person name="Kawai Y."/>
            <person name="Isono Y."/>
            <person name="Nakamura Y."/>
            <person name="Nagahari K."/>
            <person name="Murakami K."/>
            <person name="Yasuda T."/>
            <person name="Iwayanagi T."/>
            <person name="Wagatsuma M."/>
            <person name="Shiratori A."/>
            <person name="Sudo H."/>
            <person name="Hosoiri T."/>
            <person name="Kaku Y."/>
            <person name="Kodaira H."/>
            <person name="Kondo H."/>
            <person name="Sugawara M."/>
            <person name="Takahashi M."/>
            <person name="Kanda K."/>
            <person name="Yokoi T."/>
            <person name="Furuya T."/>
            <person name="Kikkawa E."/>
            <person name="Omura Y."/>
            <person name="Abe K."/>
            <person name="Kamihara K."/>
            <person name="Katsuta N."/>
            <person name="Sato K."/>
            <person name="Tanikawa M."/>
            <person name="Yamazaki M."/>
            <person name="Ninomiya K."/>
            <person name="Ishibashi T."/>
            <person name="Yamashita H."/>
            <person name="Murakawa K."/>
            <person name="Fujimori K."/>
            <person name="Tanai H."/>
            <person name="Kimata M."/>
            <person name="Watanabe M."/>
            <person name="Hiraoka S."/>
            <person name="Chiba Y."/>
            <person name="Ishida S."/>
            <person name="Ono Y."/>
            <person name="Takiguchi S."/>
            <person name="Watanabe S."/>
            <person name="Yosida M."/>
            <person name="Hotuta T."/>
            <person name="Kusano J."/>
            <person name="Kanehori K."/>
            <person name="Takahashi-Fujii A."/>
            <person name="Hara H."/>
            <person name="Tanase T.-O."/>
            <person name="Nomura Y."/>
            <person name="Togiya S."/>
            <person name="Komai F."/>
            <person name="Hara R."/>
            <person name="Takeuchi K."/>
            <person name="Arita M."/>
            <person name="Imose N."/>
            <person name="Musashino K."/>
            <person name="Yuuki H."/>
            <person name="Oshima A."/>
            <person name="Sasaki N."/>
            <person name="Aotsuka S."/>
            <person name="Yoshikawa Y."/>
            <person name="Matsunawa H."/>
            <person name="Ichihara T."/>
            <person name="Shiohata N."/>
            <person name="Sano S."/>
            <person name="Moriya S."/>
            <person name="Momiyama H."/>
            <person name="Satoh N."/>
            <person name="Takami S."/>
            <person name="Terashima Y."/>
            <person name="Suzuki O."/>
            <person name="Nakagawa S."/>
            <person name="Senoh A."/>
            <person name="Mizoguchi H."/>
            <person name="Goto Y."/>
            <person name="Shimizu F."/>
            <person name="Wakebe H."/>
            <person name="Hishigaki H."/>
            <person name="Watanabe T."/>
            <person name="Sugiyama A."/>
            <person name="Takemoto M."/>
            <person name="Kawakami B."/>
            <person name="Yamazaki M."/>
            <person name="Watanabe K."/>
            <person name="Kumagai A."/>
            <person name="Itakura S."/>
            <person name="Fukuzumi Y."/>
            <person name="Fujimori Y."/>
            <person name="Komiyama M."/>
            <person name="Tashiro H."/>
            <person name="Tanigami A."/>
            <person name="Fujiwara T."/>
            <person name="Ono T."/>
            <person name="Yamada K."/>
            <person name="Fujii Y."/>
            <person name="Ozaki K."/>
            <person name="Hirao M."/>
            <person name="Ohmori Y."/>
            <person name="Kawabata A."/>
            <person name="Hikiji T."/>
            <person name="Kobatake N."/>
            <person name="Inagaki H."/>
            <person name="Ikema Y."/>
            <person name="Okamoto S."/>
            <person name="Okitani R."/>
            <person name="Kawakami T."/>
            <person name="Noguchi S."/>
            <person name="Itoh T."/>
            <person name="Shigeta K."/>
            <person name="Senba T."/>
            <person name="Matsumura K."/>
            <person name="Nakajima Y."/>
            <person name="Mizuno T."/>
            <person name="Morinaga M."/>
            <person name="Sasaki M."/>
            <person name="Togashi T."/>
            <person name="Oyama M."/>
            <person name="Hata H."/>
            <person name="Watanabe M."/>
            <person name="Komatsu T."/>
            <person name="Mizushima-Sugano J."/>
            <person name="Satoh T."/>
            <person name="Shirai Y."/>
            <person name="Takahashi Y."/>
            <person name="Nakagawa K."/>
            <person name="Okumura K."/>
            <person name="Nagase T."/>
            <person name="Nomura N."/>
            <person name="Kikuchi H."/>
            <person name="Masuho Y."/>
            <person name="Yamashita R."/>
            <person name="Nakai K."/>
            <person name="Yada T."/>
            <person name="Nakamura Y."/>
            <person name="Ohara O."/>
            <person name="Isogai T."/>
            <person name="Sugano S."/>
        </authorList>
    </citation>
    <scope>NUCLEOTIDE SEQUENCE [LARGE SCALE MRNA] (ISOFORM 2)</scope>
    <source>
        <tissue>Hippocampus</tissue>
    </source>
</reference>
<reference key="3">
    <citation type="journal article" date="2006" name="Nature">
        <title>The DNA sequence and biological annotation of human chromosome 1.</title>
        <authorList>
            <person name="Gregory S.G."/>
            <person name="Barlow K.F."/>
            <person name="McLay K.E."/>
            <person name="Kaul R."/>
            <person name="Swarbreck D."/>
            <person name="Dunham A."/>
            <person name="Scott C.E."/>
            <person name="Howe K.L."/>
            <person name="Woodfine K."/>
            <person name="Spencer C.C.A."/>
            <person name="Jones M.C."/>
            <person name="Gillson C."/>
            <person name="Searle S."/>
            <person name="Zhou Y."/>
            <person name="Kokocinski F."/>
            <person name="McDonald L."/>
            <person name="Evans R."/>
            <person name="Phillips K."/>
            <person name="Atkinson A."/>
            <person name="Cooper R."/>
            <person name="Jones C."/>
            <person name="Hall R.E."/>
            <person name="Andrews T.D."/>
            <person name="Lloyd C."/>
            <person name="Ainscough R."/>
            <person name="Almeida J.P."/>
            <person name="Ambrose K.D."/>
            <person name="Anderson F."/>
            <person name="Andrew R.W."/>
            <person name="Ashwell R.I.S."/>
            <person name="Aubin K."/>
            <person name="Babbage A.K."/>
            <person name="Bagguley C.L."/>
            <person name="Bailey J."/>
            <person name="Beasley H."/>
            <person name="Bethel G."/>
            <person name="Bird C.P."/>
            <person name="Bray-Allen S."/>
            <person name="Brown J.Y."/>
            <person name="Brown A.J."/>
            <person name="Buckley D."/>
            <person name="Burton J."/>
            <person name="Bye J."/>
            <person name="Carder C."/>
            <person name="Chapman J.C."/>
            <person name="Clark S.Y."/>
            <person name="Clarke G."/>
            <person name="Clee C."/>
            <person name="Cobley V."/>
            <person name="Collier R.E."/>
            <person name="Corby N."/>
            <person name="Coville G.J."/>
            <person name="Davies J."/>
            <person name="Deadman R."/>
            <person name="Dunn M."/>
            <person name="Earthrowl M."/>
            <person name="Ellington A.G."/>
            <person name="Errington H."/>
            <person name="Frankish A."/>
            <person name="Frankland J."/>
            <person name="French L."/>
            <person name="Garner P."/>
            <person name="Garnett J."/>
            <person name="Gay L."/>
            <person name="Ghori M.R.J."/>
            <person name="Gibson R."/>
            <person name="Gilby L.M."/>
            <person name="Gillett W."/>
            <person name="Glithero R.J."/>
            <person name="Grafham D.V."/>
            <person name="Griffiths C."/>
            <person name="Griffiths-Jones S."/>
            <person name="Grocock R."/>
            <person name="Hammond S."/>
            <person name="Harrison E.S.I."/>
            <person name="Hart E."/>
            <person name="Haugen E."/>
            <person name="Heath P.D."/>
            <person name="Holmes S."/>
            <person name="Holt K."/>
            <person name="Howden P.J."/>
            <person name="Hunt A.R."/>
            <person name="Hunt S.E."/>
            <person name="Hunter G."/>
            <person name="Isherwood J."/>
            <person name="James R."/>
            <person name="Johnson C."/>
            <person name="Johnson D."/>
            <person name="Joy A."/>
            <person name="Kay M."/>
            <person name="Kershaw J.K."/>
            <person name="Kibukawa M."/>
            <person name="Kimberley A.M."/>
            <person name="King A."/>
            <person name="Knights A.J."/>
            <person name="Lad H."/>
            <person name="Laird G."/>
            <person name="Lawlor S."/>
            <person name="Leongamornlert D.A."/>
            <person name="Lloyd D.M."/>
            <person name="Loveland J."/>
            <person name="Lovell J."/>
            <person name="Lush M.J."/>
            <person name="Lyne R."/>
            <person name="Martin S."/>
            <person name="Mashreghi-Mohammadi M."/>
            <person name="Matthews L."/>
            <person name="Matthews N.S.W."/>
            <person name="McLaren S."/>
            <person name="Milne S."/>
            <person name="Mistry S."/>
            <person name="Moore M.J.F."/>
            <person name="Nickerson T."/>
            <person name="O'Dell C.N."/>
            <person name="Oliver K."/>
            <person name="Palmeiri A."/>
            <person name="Palmer S.A."/>
            <person name="Parker A."/>
            <person name="Patel D."/>
            <person name="Pearce A.V."/>
            <person name="Peck A.I."/>
            <person name="Pelan S."/>
            <person name="Phelps K."/>
            <person name="Phillimore B.J."/>
            <person name="Plumb R."/>
            <person name="Rajan J."/>
            <person name="Raymond C."/>
            <person name="Rouse G."/>
            <person name="Saenphimmachak C."/>
            <person name="Sehra H.K."/>
            <person name="Sheridan E."/>
            <person name="Shownkeen R."/>
            <person name="Sims S."/>
            <person name="Skuce C.D."/>
            <person name="Smith M."/>
            <person name="Steward C."/>
            <person name="Subramanian S."/>
            <person name="Sycamore N."/>
            <person name="Tracey A."/>
            <person name="Tromans A."/>
            <person name="Van Helmond Z."/>
            <person name="Wall M."/>
            <person name="Wallis J.M."/>
            <person name="White S."/>
            <person name="Whitehead S.L."/>
            <person name="Wilkinson J.E."/>
            <person name="Willey D.L."/>
            <person name="Williams H."/>
            <person name="Wilming L."/>
            <person name="Wray P.W."/>
            <person name="Wu Z."/>
            <person name="Coulson A."/>
            <person name="Vaudin M."/>
            <person name="Sulston J.E."/>
            <person name="Durbin R.M."/>
            <person name="Hubbard T."/>
            <person name="Wooster R."/>
            <person name="Dunham I."/>
            <person name="Carter N.P."/>
            <person name="McVean G."/>
            <person name="Ross M.T."/>
            <person name="Harrow J."/>
            <person name="Olson M.V."/>
            <person name="Beck S."/>
            <person name="Rogers J."/>
            <person name="Bentley D.R."/>
        </authorList>
    </citation>
    <scope>NUCLEOTIDE SEQUENCE [LARGE SCALE GENOMIC DNA]</scope>
</reference>
<reference key="4">
    <citation type="submission" date="2005-07" db="EMBL/GenBank/DDBJ databases">
        <authorList>
            <person name="Mural R.J."/>
            <person name="Istrail S."/>
            <person name="Sutton G.G."/>
            <person name="Florea L."/>
            <person name="Halpern A.L."/>
            <person name="Mobarry C.M."/>
            <person name="Lippert R."/>
            <person name="Walenz B."/>
            <person name="Shatkay H."/>
            <person name="Dew I."/>
            <person name="Miller J.R."/>
            <person name="Flanigan M.J."/>
            <person name="Edwards N.J."/>
            <person name="Bolanos R."/>
            <person name="Fasulo D."/>
            <person name="Halldorsson B.V."/>
            <person name="Hannenhalli S."/>
            <person name="Turner R."/>
            <person name="Yooseph S."/>
            <person name="Lu F."/>
            <person name="Nusskern D.R."/>
            <person name="Shue B.C."/>
            <person name="Zheng X.H."/>
            <person name="Zhong F."/>
            <person name="Delcher A.L."/>
            <person name="Huson D.H."/>
            <person name="Kravitz S.A."/>
            <person name="Mouchard L."/>
            <person name="Reinert K."/>
            <person name="Remington K.A."/>
            <person name="Clark A.G."/>
            <person name="Waterman M.S."/>
            <person name="Eichler E.E."/>
            <person name="Adams M.D."/>
            <person name="Hunkapiller M.W."/>
            <person name="Myers E.W."/>
            <person name="Venter J.C."/>
        </authorList>
    </citation>
    <scope>NUCLEOTIDE SEQUENCE [LARGE SCALE GENOMIC DNA]</scope>
</reference>
<reference key="5">
    <citation type="journal article" date="2004" name="Genome Res.">
        <title>The status, quality, and expansion of the NIH full-length cDNA project: the Mammalian Gene Collection (MGC).</title>
        <authorList>
            <consortium name="The MGC Project Team"/>
        </authorList>
    </citation>
    <scope>NUCLEOTIDE SEQUENCE [LARGE SCALE MRNA] (ISOFORM 2)</scope>
    <source>
        <tissue>Lung</tissue>
    </source>
</reference>
<reference key="6">
    <citation type="submission" date="1998-12" db="EMBL/GenBank/DDBJ databases">
        <authorList>
            <person name="Zhao B."/>
            <person name="Xu Y.Y."/>
            <person name="Liu Y.Q."/>
            <person name="Wang X.Y."/>
            <person name="Liu B."/>
            <person name="Ye J."/>
            <person name="Song L."/>
            <person name="Zhao Y."/>
            <person name="Cao H.Q."/>
            <person name="Zhao X.W."/>
            <person name="Gao Y."/>
            <person name="Liu L.S."/>
            <person name="Ding J.F."/>
            <person name="Gao R.L."/>
            <person name="Wu Q.Y."/>
            <person name="Qiang B.Q."/>
            <person name="Yuan J.G."/>
            <person name="Liew C.C."/>
            <person name="Zhao M.S."/>
            <person name="Hui R.T."/>
        </authorList>
    </citation>
    <scope>NUCLEOTIDE SEQUENCE [LARGE SCALE MRNA] OF 6-772 (ISOFORMS 1/2)</scope>
    <source>
        <tissue>Heart</tissue>
    </source>
</reference>
<reference key="7">
    <citation type="journal article" date="2009" name="Proc. Natl. Acad. Sci. U.S.A.">
        <title>Distinct ubiquitin ligases act sequentially for RNA polymerase II polyubiquitylation.</title>
        <authorList>
            <person name="Harreman M."/>
            <person name="Taschner M."/>
            <person name="Sigurdsson S."/>
            <person name="Anindya R."/>
            <person name="Reid J."/>
            <person name="Somesh B."/>
            <person name="Kong S.E."/>
            <person name="Banks C.A."/>
            <person name="Conaway R.C."/>
            <person name="Conaway J.W."/>
            <person name="Svejstrup J.Q."/>
        </authorList>
    </citation>
    <scope>FUNCTION</scope>
    <scope>IDENTIFICATION IN COMPLEX WITH CUL5; ELOB; ELOC AND RBX1</scope>
</reference>
<reference key="8">
    <citation type="journal article" date="2009" name="Sci. Signal.">
        <title>Quantitative phosphoproteomic analysis of T cell receptor signaling reveals system-wide modulation of protein-protein interactions.</title>
        <authorList>
            <person name="Mayya V."/>
            <person name="Lundgren D.H."/>
            <person name="Hwang S.-I."/>
            <person name="Rezaul K."/>
            <person name="Wu L."/>
            <person name="Eng J.K."/>
            <person name="Rodionov V."/>
            <person name="Han D.K."/>
        </authorList>
    </citation>
    <scope>PHOSPHORYLATION [LARGE SCALE ANALYSIS] AT SER-384 AND THR-394</scope>
    <scope>IDENTIFICATION BY MASS SPECTROMETRY [LARGE SCALE ANALYSIS]</scope>
    <source>
        <tissue>Leukemic T-cell</tissue>
    </source>
</reference>
<reference key="9">
    <citation type="journal article" date="2010" name="Sci. Signal.">
        <title>Quantitative phosphoproteomics reveals widespread full phosphorylation site occupancy during mitosis.</title>
        <authorList>
            <person name="Olsen J.V."/>
            <person name="Vermeulen M."/>
            <person name="Santamaria A."/>
            <person name="Kumar C."/>
            <person name="Miller M.L."/>
            <person name="Jensen L.J."/>
            <person name="Gnad F."/>
            <person name="Cox J."/>
            <person name="Jensen T.S."/>
            <person name="Nigg E.A."/>
            <person name="Brunak S."/>
            <person name="Mann M."/>
        </authorList>
    </citation>
    <scope>PHOSPHORYLATION [LARGE SCALE ANALYSIS] AT SER-384 AND SER-387</scope>
    <scope>IDENTIFICATION BY MASS SPECTROMETRY [LARGE SCALE ANALYSIS]</scope>
    <source>
        <tissue>Cervix carcinoma</tissue>
    </source>
</reference>
<reference key="10">
    <citation type="journal article" date="2011" name="BMC Syst. Biol.">
        <title>Initial characterization of the human central proteome.</title>
        <authorList>
            <person name="Burkard T.R."/>
            <person name="Planyavsky M."/>
            <person name="Kaupe I."/>
            <person name="Breitwieser F.P."/>
            <person name="Buerckstuemmer T."/>
            <person name="Bennett K.L."/>
            <person name="Superti-Furga G."/>
            <person name="Colinge J."/>
        </authorList>
    </citation>
    <scope>IDENTIFICATION BY MASS SPECTROMETRY [LARGE SCALE ANALYSIS]</scope>
</reference>
<reference key="11">
    <citation type="journal article" date="2012" name="Proc. Natl. Acad. Sci. U.S.A.">
        <title>N-terminal acetylome analyses and functional insights of the N-terminal acetyltransferase NatB.</title>
        <authorList>
            <person name="Van Damme P."/>
            <person name="Lasa M."/>
            <person name="Polevoda B."/>
            <person name="Gazquez C."/>
            <person name="Elosegui-Artola A."/>
            <person name="Kim D.S."/>
            <person name="De Juan-Pardo E."/>
            <person name="Demeyer K."/>
            <person name="Hole K."/>
            <person name="Larrea E."/>
            <person name="Timmerman E."/>
            <person name="Prieto J."/>
            <person name="Arnesen T."/>
            <person name="Sherman F."/>
            <person name="Gevaert K."/>
            <person name="Aldabe R."/>
        </authorList>
    </citation>
    <scope>IDENTIFICATION BY MASS SPECTROMETRY [LARGE SCALE ANALYSIS]</scope>
</reference>
<reference key="12">
    <citation type="journal article" date="2013" name="J. Proteome Res.">
        <title>Toward a comprehensive characterization of a human cancer cell phosphoproteome.</title>
        <authorList>
            <person name="Zhou H."/>
            <person name="Di Palma S."/>
            <person name="Preisinger C."/>
            <person name="Peng M."/>
            <person name="Polat A.N."/>
            <person name="Heck A.J."/>
            <person name="Mohammed S."/>
        </authorList>
    </citation>
    <scope>PHOSPHORYLATION [LARGE SCALE ANALYSIS] AT SER-384 AND SER-516</scope>
    <scope>IDENTIFICATION BY MASS SPECTROMETRY [LARGE SCALE ANALYSIS]</scope>
    <source>
        <tissue>Cervix carcinoma</tissue>
        <tissue>Erythroleukemia</tissue>
    </source>
</reference>
<reference key="13">
    <citation type="journal article" date="2022" name="DNA Repair">
        <title>UBAP2/UBAP2L regulate UV-induced ubiquitylation of RNA polymerase II and are the human orthologues of yeast Def1.</title>
        <authorList>
            <person name="Herlihy A.E."/>
            <person name="Boeing S."/>
            <person name="Weems J.C."/>
            <person name="Walker J."/>
            <person name="Dirac-Svejstrup A.B."/>
            <person name="Lehner M.H."/>
            <person name="Conaway R.C."/>
            <person name="Conaway J.W."/>
            <person name="Svejstrup J.Q."/>
        </authorList>
    </citation>
    <scope>SUBCELLULAR LOCATION</scope>
</reference>
<accession>Q14241</accession>
<accession>B2R7Q8</accession>
<accession>Q8IXH1</accession>
<gene>
    <name evidence="10" type="primary">ELOA</name>
    <name type="synonym">TCEB3</name>
    <name type="ORF">MSTP059</name>
</gene>
<evidence type="ECO:0000250" key="1">
    <source>
        <dbReference type="UniProtKB" id="Q63187"/>
    </source>
</evidence>
<evidence type="ECO:0000250" key="2">
    <source>
        <dbReference type="UniProtKB" id="Q8CB77"/>
    </source>
</evidence>
<evidence type="ECO:0000255" key="3">
    <source>
        <dbReference type="PROSITE-ProRule" id="PRU00080"/>
    </source>
</evidence>
<evidence type="ECO:0000255" key="4">
    <source>
        <dbReference type="PROSITE-ProRule" id="PRU00649"/>
    </source>
</evidence>
<evidence type="ECO:0000256" key="5">
    <source>
        <dbReference type="SAM" id="MobiDB-lite"/>
    </source>
</evidence>
<evidence type="ECO:0000269" key="6">
    <source>
    </source>
</evidence>
<evidence type="ECO:0000269" key="7">
    <source>
    </source>
</evidence>
<evidence type="ECO:0000269" key="8">
    <source>
    </source>
</evidence>
<evidence type="ECO:0000305" key="9"/>
<evidence type="ECO:0000312" key="10">
    <source>
        <dbReference type="HGNC" id="HGNC:11620"/>
    </source>
</evidence>
<evidence type="ECO:0007744" key="11">
    <source>
    </source>
</evidence>
<evidence type="ECO:0007744" key="12">
    <source>
    </source>
</evidence>
<evidence type="ECO:0007744" key="13">
    <source>
    </source>
</evidence>
<evidence type="ECO:0007829" key="14">
    <source>
        <dbReference type="PDB" id="4HFX"/>
    </source>
</evidence>
<evidence type="ECO:0007829" key="15">
    <source>
        <dbReference type="PDB" id="6ZUZ"/>
    </source>
</evidence>
<evidence type="ECO:0007829" key="16">
    <source>
        <dbReference type="PDB" id="8OEW"/>
    </source>
</evidence>
<evidence type="ECO:0007829" key="17">
    <source>
        <dbReference type="PDB" id="8OF0"/>
    </source>
</evidence>
<dbReference type="EMBL" id="L47345">
    <property type="protein sequence ID" value="AAA75492.1"/>
    <property type="molecule type" value="mRNA"/>
</dbReference>
<dbReference type="EMBL" id="AK313079">
    <property type="protein sequence ID" value="BAG35905.1"/>
    <property type="molecule type" value="mRNA"/>
</dbReference>
<dbReference type="EMBL" id="AL031295">
    <property type="status" value="NOT_ANNOTATED_CDS"/>
    <property type="molecule type" value="Genomic_DNA"/>
</dbReference>
<dbReference type="EMBL" id="CH471134">
    <property type="protein sequence ID" value="EAW95070.1"/>
    <property type="molecule type" value="Genomic_DNA"/>
</dbReference>
<dbReference type="EMBL" id="BC002883">
    <property type="protein sequence ID" value="AAH02883.1"/>
    <property type="molecule type" value="mRNA"/>
</dbReference>
<dbReference type="EMBL" id="AF116729">
    <property type="protein sequence ID" value="AAO15305.1"/>
    <property type="status" value="ALT_INIT"/>
    <property type="molecule type" value="mRNA"/>
</dbReference>
<dbReference type="CCDS" id="CCDS239.3">
    <molecule id="Q14241-2"/>
</dbReference>
<dbReference type="PIR" id="JC4636">
    <property type="entry name" value="JC4636"/>
</dbReference>
<dbReference type="RefSeq" id="NP_003189.3">
    <molecule id="Q14241-2"/>
    <property type="nucleotide sequence ID" value="NM_003198.3"/>
</dbReference>
<dbReference type="PDB" id="4HFX">
    <property type="method" value="X-ray"/>
    <property type="resolution" value="2.54 A"/>
    <property type="chains" value="A/B/C/D=571-656"/>
</dbReference>
<dbReference type="PDB" id="6ZUZ">
    <property type="method" value="NMR"/>
    <property type="chains" value="A=1-82"/>
</dbReference>
<dbReference type="PDB" id="8OEV">
    <property type="method" value="EM"/>
    <property type="resolution" value="2.86 A"/>
    <property type="chains" value="M=1-772"/>
</dbReference>
<dbReference type="PDB" id="8OEW">
    <property type="method" value="EM"/>
    <property type="resolution" value="2.80 A"/>
    <property type="chains" value="M=1-772"/>
</dbReference>
<dbReference type="PDB" id="8OF0">
    <property type="method" value="EM"/>
    <property type="resolution" value="3.05 A"/>
    <property type="chains" value="M=1-772"/>
</dbReference>
<dbReference type="PDBsum" id="4HFX"/>
<dbReference type="PDBsum" id="6ZUZ"/>
<dbReference type="PDBsum" id="8OEV"/>
<dbReference type="PDBsum" id="8OEW"/>
<dbReference type="PDBsum" id="8OF0"/>
<dbReference type="EMDB" id="EMD-16832"/>
<dbReference type="EMDB" id="EMD-16833"/>
<dbReference type="EMDB" id="EMD-16837"/>
<dbReference type="EMDB" id="EMD-16838"/>
<dbReference type="EMDB" id="EMD-16840"/>
<dbReference type="SMR" id="Q14241"/>
<dbReference type="BioGRID" id="112786">
    <property type="interactions" value="250"/>
</dbReference>
<dbReference type="FunCoup" id="Q14241">
    <property type="interactions" value="2367"/>
</dbReference>
<dbReference type="IntAct" id="Q14241">
    <property type="interactions" value="105"/>
</dbReference>
<dbReference type="MINT" id="Q14241"/>
<dbReference type="STRING" id="9606.ENSP00000395574"/>
<dbReference type="GlyCosmos" id="Q14241">
    <property type="glycosylation" value="1 site, 1 glycan"/>
</dbReference>
<dbReference type="iPTMnet" id="Q14241"/>
<dbReference type="PhosphoSitePlus" id="Q14241"/>
<dbReference type="BioMuta" id="ELOA"/>
<dbReference type="DMDM" id="294862430"/>
<dbReference type="jPOST" id="Q14241"/>
<dbReference type="MassIVE" id="Q14241"/>
<dbReference type="PaxDb" id="9606-ENSP00000395574"/>
<dbReference type="PeptideAtlas" id="Q14241"/>
<dbReference type="ProteomicsDB" id="59938"/>
<dbReference type="Pumba" id="Q14241"/>
<dbReference type="Antibodypedia" id="1742">
    <property type="antibodies" value="381 antibodies from 32 providers"/>
</dbReference>
<dbReference type="DNASU" id="6924"/>
<dbReference type="Ensembl" id="ENST00000613537.5">
    <molecule id="Q14241-2"/>
    <property type="protein sequence ID" value="ENSP00000484196.2"/>
    <property type="gene ID" value="ENSG00000011007.13"/>
</dbReference>
<dbReference type="GeneID" id="6924"/>
<dbReference type="KEGG" id="hsa:6924"/>
<dbReference type="MANE-Select" id="ENST00000613537.5">
    <property type="protein sequence ID" value="ENSP00000484196.2"/>
    <property type="RefSeq nucleotide sequence ID" value="NM_003198.3"/>
    <property type="RefSeq protein sequence ID" value="NP_003189.3"/>
</dbReference>
<dbReference type="UCSC" id="uc001bho.4">
    <molecule id="Q14241-2"/>
    <property type="organism name" value="human"/>
</dbReference>
<dbReference type="AGR" id="HGNC:11620"/>
<dbReference type="CTD" id="6924"/>
<dbReference type="DisGeNET" id="6924"/>
<dbReference type="GeneCards" id="ELOA"/>
<dbReference type="HGNC" id="HGNC:11620">
    <property type="gene designation" value="ELOA"/>
</dbReference>
<dbReference type="HPA" id="ENSG00000011007">
    <property type="expression patterns" value="Low tissue specificity"/>
</dbReference>
<dbReference type="MIM" id="600786">
    <property type="type" value="gene"/>
</dbReference>
<dbReference type="neXtProt" id="NX_Q14241"/>
<dbReference type="OpenTargets" id="ENSG00000011007"/>
<dbReference type="PharmGKB" id="PA36379"/>
<dbReference type="VEuPathDB" id="HostDB:ENSG00000011007"/>
<dbReference type="eggNOG" id="KOG2821">
    <property type="taxonomic scope" value="Eukaryota"/>
</dbReference>
<dbReference type="GeneTree" id="ENSGT00390000002428"/>
<dbReference type="InParanoid" id="Q14241"/>
<dbReference type="OMA" id="MFLRCEE"/>
<dbReference type="OrthoDB" id="21513at2759"/>
<dbReference type="PAN-GO" id="Q14241">
    <property type="GO annotations" value="0 GO annotations based on evolutionary models"/>
</dbReference>
<dbReference type="PhylomeDB" id="Q14241"/>
<dbReference type="TreeFam" id="TF317259"/>
<dbReference type="PathwayCommons" id="Q14241"/>
<dbReference type="Reactome" id="R-HSA-112382">
    <property type="pathway name" value="Formation of RNA Pol II elongation complex"/>
</dbReference>
<dbReference type="Reactome" id="R-HSA-167152">
    <property type="pathway name" value="Formation of HIV elongation complex in the absence of HIV Tat"/>
</dbReference>
<dbReference type="Reactome" id="R-HSA-167200">
    <property type="pathway name" value="Formation of HIV-1 elongation complex containing HIV-1 Tat"/>
</dbReference>
<dbReference type="Reactome" id="R-HSA-167238">
    <property type="pathway name" value="Pausing and recovery of Tat-mediated HIV elongation"/>
</dbReference>
<dbReference type="Reactome" id="R-HSA-167243">
    <property type="pathway name" value="Tat-mediated HIV elongation arrest and recovery"/>
</dbReference>
<dbReference type="Reactome" id="R-HSA-167246">
    <property type="pathway name" value="Tat-mediated elongation of the HIV-1 transcript"/>
</dbReference>
<dbReference type="Reactome" id="R-HSA-167287">
    <property type="pathway name" value="HIV elongation arrest and recovery"/>
</dbReference>
<dbReference type="Reactome" id="R-HSA-167290">
    <property type="pathway name" value="Pausing and recovery of HIV elongation"/>
</dbReference>
<dbReference type="Reactome" id="R-HSA-674695">
    <property type="pathway name" value="RNA Polymerase II Pre-transcription Events"/>
</dbReference>
<dbReference type="Reactome" id="R-HSA-6796648">
    <property type="pathway name" value="TP53 Regulates Transcription of DNA Repair Genes"/>
</dbReference>
<dbReference type="Reactome" id="R-HSA-75955">
    <property type="pathway name" value="RNA Polymerase II Transcription Elongation"/>
</dbReference>
<dbReference type="SignaLink" id="Q14241"/>
<dbReference type="BioGRID-ORCS" id="6924">
    <property type="hits" value="63 hits in 1215 CRISPR screens"/>
</dbReference>
<dbReference type="CD-CODE" id="91857CE7">
    <property type="entry name" value="Nucleolus"/>
</dbReference>
<dbReference type="ChiTaRS" id="TCEB3">
    <property type="organism name" value="human"/>
</dbReference>
<dbReference type="EvolutionaryTrace" id="Q14241"/>
<dbReference type="GeneWiki" id="TCEB3"/>
<dbReference type="GenomeRNAi" id="6924"/>
<dbReference type="Pharos" id="Q14241">
    <property type="development level" value="Tbio"/>
</dbReference>
<dbReference type="PRO" id="PR:Q14241"/>
<dbReference type="Proteomes" id="UP000005640">
    <property type="component" value="Chromosome 1"/>
</dbReference>
<dbReference type="RNAct" id="Q14241">
    <property type="molecule type" value="protein"/>
</dbReference>
<dbReference type="Bgee" id="ENSG00000011007">
    <property type="expression patterns" value="Expressed in buccal mucosa cell and 214 other cell types or tissues"/>
</dbReference>
<dbReference type="ExpressionAtlas" id="Q14241">
    <property type="expression patterns" value="baseline and differential"/>
</dbReference>
<dbReference type="GO" id="GO:0070449">
    <property type="term" value="C:elongin complex"/>
    <property type="evidence" value="ECO:0000314"/>
    <property type="project" value="UniProtKB"/>
</dbReference>
<dbReference type="GO" id="GO:0005615">
    <property type="term" value="C:extracellular space"/>
    <property type="evidence" value="ECO:0007005"/>
    <property type="project" value="UniProtKB"/>
</dbReference>
<dbReference type="GO" id="GO:0005654">
    <property type="term" value="C:nucleoplasm"/>
    <property type="evidence" value="ECO:0000304"/>
    <property type="project" value="Reactome"/>
</dbReference>
<dbReference type="GO" id="GO:0090734">
    <property type="term" value="C:site of DNA damage"/>
    <property type="evidence" value="ECO:0000250"/>
    <property type="project" value="UniProtKB"/>
</dbReference>
<dbReference type="GO" id="GO:0006357">
    <property type="term" value="P:regulation of transcription by RNA polymerase II"/>
    <property type="evidence" value="ECO:0000304"/>
    <property type="project" value="ProtInc"/>
</dbReference>
<dbReference type="GO" id="GO:0006368">
    <property type="term" value="P:transcription elongation by RNA polymerase II"/>
    <property type="evidence" value="ECO:0007669"/>
    <property type="project" value="InterPro"/>
</dbReference>
<dbReference type="GO" id="GO:0006367">
    <property type="term" value="P:transcription initiation at RNA polymerase II promoter"/>
    <property type="evidence" value="ECO:0000314"/>
    <property type="project" value="UniProtKB"/>
</dbReference>
<dbReference type="CDD" id="cd00183">
    <property type="entry name" value="TFIIS_I"/>
    <property type="match status" value="1"/>
</dbReference>
<dbReference type="FunFam" id="1.20.930.10:FF:000010">
    <property type="entry name" value="elongin-A isoform X1"/>
    <property type="match status" value="1"/>
</dbReference>
<dbReference type="Gene3D" id="6.10.250.3180">
    <property type="match status" value="1"/>
</dbReference>
<dbReference type="Gene3D" id="1.20.930.10">
    <property type="entry name" value="Conserved domain common to transcription factors TFIIS, elongin A, CRSP70"/>
    <property type="match status" value="1"/>
</dbReference>
<dbReference type="InterPro" id="IPR051870">
    <property type="entry name" value="Elongin-A_domain"/>
</dbReference>
<dbReference type="InterPro" id="IPR001810">
    <property type="entry name" value="F-box_dom"/>
</dbReference>
<dbReference type="InterPro" id="IPR010684">
    <property type="entry name" value="RNA_pol_II_trans_fac_SIII_A"/>
</dbReference>
<dbReference type="InterPro" id="IPR003617">
    <property type="entry name" value="TFIIS/CRSP70_N_sub"/>
</dbReference>
<dbReference type="InterPro" id="IPR035441">
    <property type="entry name" value="TFIIS/LEDGF_dom_sf"/>
</dbReference>
<dbReference type="InterPro" id="IPR017923">
    <property type="entry name" value="TFIIS_N"/>
</dbReference>
<dbReference type="PANTHER" id="PTHR15141:SF75">
    <property type="entry name" value="ELONGIN-A"/>
    <property type="match status" value="1"/>
</dbReference>
<dbReference type="PANTHER" id="PTHR15141">
    <property type="entry name" value="TRANSCRIPTION ELONGATION FACTOR B POLYPEPTIDE 3"/>
    <property type="match status" value="1"/>
</dbReference>
<dbReference type="Pfam" id="PF06881">
    <property type="entry name" value="Elongin_A"/>
    <property type="match status" value="1"/>
</dbReference>
<dbReference type="Pfam" id="PF08711">
    <property type="entry name" value="Med26"/>
    <property type="match status" value="1"/>
</dbReference>
<dbReference type="SMART" id="SM00509">
    <property type="entry name" value="TFS2N"/>
    <property type="match status" value="1"/>
</dbReference>
<dbReference type="SUPFAM" id="SSF47676">
    <property type="entry name" value="Conserved domain common to transcription factors TFIIS, elongin A, CRSP70"/>
    <property type="match status" value="1"/>
</dbReference>
<dbReference type="PROSITE" id="PS50181">
    <property type="entry name" value="FBOX"/>
    <property type="match status" value="1"/>
</dbReference>
<dbReference type="PROSITE" id="PS51319">
    <property type="entry name" value="TFIIS_N"/>
    <property type="match status" value="1"/>
</dbReference>
<protein>
    <recommendedName>
        <fullName evidence="9">Elongin-A</fullName>
        <shortName>EloA</shortName>
    </recommendedName>
    <alternativeName>
        <fullName>Elongin 110 kDa subunit</fullName>
    </alternativeName>
    <alternativeName>
        <fullName>RNA polymerase II transcription factor SIII subunit A1</fullName>
    </alternativeName>
    <alternativeName>
        <fullName>SIII p110</fullName>
    </alternativeName>
    <alternativeName>
        <fullName>Transcription elongation factor B polypeptide 3</fullName>
    </alternativeName>
</protein>
<organism>
    <name type="scientific">Homo sapiens</name>
    <name type="common">Human</name>
    <dbReference type="NCBI Taxonomy" id="9606"/>
    <lineage>
        <taxon>Eukaryota</taxon>
        <taxon>Metazoa</taxon>
        <taxon>Chordata</taxon>
        <taxon>Craniata</taxon>
        <taxon>Vertebrata</taxon>
        <taxon>Euteleostomi</taxon>
        <taxon>Mammalia</taxon>
        <taxon>Eutheria</taxon>
        <taxon>Euarchontoglires</taxon>
        <taxon>Primates</taxon>
        <taxon>Haplorrhini</taxon>
        <taxon>Catarrhini</taxon>
        <taxon>Hominidae</taxon>
        <taxon>Homo</taxon>
    </lineage>
</organism>
<feature type="chain" id="PRO_0000086960" description="Elongin-A">
    <location>
        <begin position="1"/>
        <end position="772"/>
    </location>
</feature>
<feature type="domain" description="TFIIS N-terminal" evidence="4">
    <location>
        <begin position="4"/>
        <end position="79"/>
    </location>
</feature>
<feature type="domain" description="F-box" evidence="3">
    <location>
        <begin position="566"/>
        <end position="610"/>
    </location>
</feature>
<feature type="region of interest" description="Disordered" evidence="5">
    <location>
        <begin position="79"/>
        <end position="403"/>
    </location>
</feature>
<feature type="region of interest" description="Disordered" evidence="5">
    <location>
        <begin position="418"/>
        <end position="466"/>
    </location>
</feature>
<feature type="region of interest" description="Activation domain" evidence="1">
    <location>
        <begin position="522"/>
        <end position="681"/>
    </location>
</feature>
<feature type="region of interest" description="BC-box" evidence="1">
    <location>
        <begin position="550"/>
        <end position="559"/>
    </location>
</feature>
<feature type="region of interest" description="Disordered" evidence="5">
    <location>
        <begin position="674"/>
        <end position="732"/>
    </location>
</feature>
<feature type="compositionally biased region" description="Basic and acidic residues" evidence="5">
    <location>
        <begin position="79"/>
        <end position="105"/>
    </location>
</feature>
<feature type="compositionally biased region" description="Basic and acidic residues" evidence="5">
    <location>
        <begin position="136"/>
        <end position="156"/>
    </location>
</feature>
<feature type="compositionally biased region" description="Basic and acidic residues" evidence="5">
    <location>
        <begin position="226"/>
        <end position="235"/>
    </location>
</feature>
<feature type="compositionally biased region" description="Basic and acidic residues" evidence="5">
    <location>
        <begin position="253"/>
        <end position="269"/>
    </location>
</feature>
<feature type="compositionally biased region" description="Basic and acidic residues" evidence="5">
    <location>
        <begin position="275"/>
        <end position="308"/>
    </location>
</feature>
<feature type="compositionally biased region" description="Basic and acidic residues" evidence="5">
    <location>
        <begin position="321"/>
        <end position="343"/>
    </location>
</feature>
<feature type="compositionally biased region" description="Basic and acidic residues" evidence="5">
    <location>
        <begin position="372"/>
        <end position="384"/>
    </location>
</feature>
<feature type="compositionally biased region" description="Basic and acidic residues" evidence="5">
    <location>
        <begin position="434"/>
        <end position="443"/>
    </location>
</feature>
<feature type="compositionally biased region" description="Low complexity" evidence="5">
    <location>
        <begin position="705"/>
        <end position="714"/>
    </location>
</feature>
<feature type="modified residue" description="Phosphoserine" evidence="1">
    <location>
        <position position="196"/>
    </location>
</feature>
<feature type="modified residue" description="Phosphoserine" evidence="11 12 13">
    <location>
        <position position="384"/>
    </location>
</feature>
<feature type="modified residue" description="Phosphoserine" evidence="12">
    <location>
        <position position="387"/>
    </location>
</feature>
<feature type="modified residue" description="Phosphothreonine" evidence="11">
    <location>
        <position position="394"/>
    </location>
</feature>
<feature type="modified residue" description="N6-acetyllysine" evidence="2">
    <location>
        <position position="434"/>
    </location>
</feature>
<feature type="modified residue" description="Phosphoserine" evidence="13">
    <location>
        <position position="516"/>
    </location>
</feature>
<feature type="splice variant" id="VSP_062177" description="In isoform 1.">
    <original>M</original>
    <variation>MHGGRSCGPRTRREPSSGEEAAPVTAM</variation>
    <location>
        <position position="1"/>
    </location>
</feature>
<feature type="sequence variant" id="VAR_020104" description="In dbSNP:rs2235541.">
    <original>T</original>
    <variation>M</variation>
    <location>
        <position position="119"/>
    </location>
</feature>
<feature type="sequence variant" id="VAR_033850" description="In dbSNP:rs520713.">
    <original>V</original>
    <variation>I</variation>
    <location>
        <position position="298"/>
    </location>
</feature>
<feature type="sequence variant" id="VAR_033851" description="In dbSNP:rs550252.">
    <original>A</original>
    <variation>V</variation>
    <location>
        <position position="490"/>
    </location>
</feature>
<feature type="helix" evidence="15">
    <location>
        <begin position="6"/>
        <end position="18"/>
    </location>
</feature>
<feature type="helix" evidence="15">
    <location>
        <begin position="23"/>
        <end position="34"/>
    </location>
</feature>
<feature type="helix" evidence="15">
    <location>
        <begin position="40"/>
        <end position="46"/>
    </location>
</feature>
<feature type="helix" evidence="15">
    <location>
        <begin position="48"/>
        <end position="55"/>
    </location>
</feature>
<feature type="helix" evidence="15">
    <location>
        <begin position="59"/>
        <end position="72"/>
    </location>
</feature>
<feature type="turn" evidence="15">
    <location>
        <begin position="73"/>
        <end position="75"/>
    </location>
</feature>
<feature type="helix" evidence="16">
    <location>
        <begin position="551"/>
        <end position="561"/>
    </location>
</feature>
<feature type="helix" evidence="16">
    <location>
        <begin position="563"/>
        <end position="565"/>
    </location>
</feature>
<feature type="turn" evidence="17">
    <location>
        <begin position="574"/>
        <end position="577"/>
    </location>
</feature>
<feature type="helix" evidence="14">
    <location>
        <begin position="581"/>
        <end position="583"/>
    </location>
</feature>
<feature type="helix" evidence="14">
    <location>
        <begin position="586"/>
        <end position="593"/>
    </location>
</feature>
<feature type="helix" evidence="14">
    <location>
        <begin position="597"/>
        <end position="599"/>
    </location>
</feature>
<feature type="helix" evidence="14">
    <location>
        <begin position="604"/>
        <end position="610"/>
    </location>
</feature>
<feature type="strand" evidence="14">
    <location>
        <begin position="622"/>
        <end position="624"/>
    </location>
</feature>
<feature type="helix" evidence="14">
    <location>
        <begin position="626"/>
        <end position="645"/>
    </location>
</feature>
<feature type="turn" evidence="17">
    <location>
        <begin position="651"/>
        <end position="654"/>
    </location>
</feature>
<name>ELOA1_HUMAN</name>